<feature type="chain" id="PRO_0000270338" description="Methionine import ATP-binding protein MetN 3">
    <location>
        <begin position="1"/>
        <end position="341"/>
    </location>
</feature>
<feature type="domain" description="ABC transporter" evidence="1">
    <location>
        <begin position="2"/>
        <end position="241"/>
    </location>
</feature>
<feature type="binding site" evidence="1">
    <location>
        <begin position="38"/>
        <end position="45"/>
    </location>
    <ligand>
        <name>ATP</name>
        <dbReference type="ChEBI" id="CHEBI:30616"/>
    </ligand>
</feature>
<accession>Q8ELQ6</accession>
<evidence type="ECO:0000255" key="1">
    <source>
        <dbReference type="HAMAP-Rule" id="MF_01719"/>
    </source>
</evidence>
<proteinExistence type="inferred from homology"/>
<organism>
    <name type="scientific">Oceanobacillus iheyensis (strain DSM 14371 / CIP 107618 / JCM 11309 / KCTC 3954 / HTE831)</name>
    <dbReference type="NCBI Taxonomy" id="221109"/>
    <lineage>
        <taxon>Bacteria</taxon>
        <taxon>Bacillati</taxon>
        <taxon>Bacillota</taxon>
        <taxon>Bacilli</taxon>
        <taxon>Bacillales</taxon>
        <taxon>Bacillaceae</taxon>
        <taxon>Oceanobacillus</taxon>
    </lineage>
</organism>
<protein>
    <recommendedName>
        <fullName evidence="1">Methionine import ATP-binding protein MetN 3</fullName>
        <ecNumber evidence="1">7.4.2.11</ecNumber>
    </recommendedName>
</protein>
<name>METN3_OCEIH</name>
<dbReference type="EC" id="7.4.2.11" evidence="1"/>
<dbReference type="EMBL" id="BA000028">
    <property type="protein sequence ID" value="BAC15119.1"/>
    <property type="molecule type" value="Genomic_DNA"/>
</dbReference>
<dbReference type="RefSeq" id="WP_011067560.1">
    <property type="nucleotide sequence ID" value="NC_004193.1"/>
</dbReference>
<dbReference type="SMR" id="Q8ELQ6"/>
<dbReference type="STRING" id="221109.gene:10735415"/>
<dbReference type="KEGG" id="oih:OB3163"/>
<dbReference type="eggNOG" id="COG1135">
    <property type="taxonomic scope" value="Bacteria"/>
</dbReference>
<dbReference type="HOGENOM" id="CLU_000604_1_3_9"/>
<dbReference type="OrthoDB" id="9802264at2"/>
<dbReference type="PhylomeDB" id="Q8ELQ6"/>
<dbReference type="Proteomes" id="UP000000822">
    <property type="component" value="Chromosome"/>
</dbReference>
<dbReference type="GO" id="GO:0005886">
    <property type="term" value="C:plasma membrane"/>
    <property type="evidence" value="ECO:0007669"/>
    <property type="project" value="UniProtKB-SubCell"/>
</dbReference>
<dbReference type="GO" id="GO:0033232">
    <property type="term" value="F:ABC-type D-methionine transporter activity"/>
    <property type="evidence" value="ECO:0007669"/>
    <property type="project" value="UniProtKB-EC"/>
</dbReference>
<dbReference type="GO" id="GO:0005524">
    <property type="term" value="F:ATP binding"/>
    <property type="evidence" value="ECO:0007669"/>
    <property type="project" value="UniProtKB-KW"/>
</dbReference>
<dbReference type="GO" id="GO:0016887">
    <property type="term" value="F:ATP hydrolysis activity"/>
    <property type="evidence" value="ECO:0007669"/>
    <property type="project" value="InterPro"/>
</dbReference>
<dbReference type="CDD" id="cd03258">
    <property type="entry name" value="ABC_MetN_methionine_transporter"/>
    <property type="match status" value="1"/>
</dbReference>
<dbReference type="FunFam" id="3.40.50.300:FF:000056">
    <property type="entry name" value="Cell division ATP-binding protein FtsE"/>
    <property type="match status" value="1"/>
</dbReference>
<dbReference type="Gene3D" id="3.30.70.260">
    <property type="match status" value="1"/>
</dbReference>
<dbReference type="Gene3D" id="3.40.50.300">
    <property type="entry name" value="P-loop containing nucleotide triphosphate hydrolases"/>
    <property type="match status" value="1"/>
</dbReference>
<dbReference type="InterPro" id="IPR003593">
    <property type="entry name" value="AAA+_ATPase"/>
</dbReference>
<dbReference type="InterPro" id="IPR003439">
    <property type="entry name" value="ABC_transporter-like_ATP-bd"/>
</dbReference>
<dbReference type="InterPro" id="IPR017871">
    <property type="entry name" value="ABC_transporter-like_CS"/>
</dbReference>
<dbReference type="InterPro" id="IPR045865">
    <property type="entry name" value="ACT-like_dom_sf"/>
</dbReference>
<dbReference type="InterPro" id="IPR041701">
    <property type="entry name" value="MetN_ABC"/>
</dbReference>
<dbReference type="InterPro" id="IPR050086">
    <property type="entry name" value="MetN_ABC_transporter-like"/>
</dbReference>
<dbReference type="InterPro" id="IPR018449">
    <property type="entry name" value="NIL_domain"/>
</dbReference>
<dbReference type="InterPro" id="IPR027417">
    <property type="entry name" value="P-loop_NTPase"/>
</dbReference>
<dbReference type="PANTHER" id="PTHR43166">
    <property type="entry name" value="AMINO ACID IMPORT ATP-BINDING PROTEIN"/>
    <property type="match status" value="1"/>
</dbReference>
<dbReference type="PANTHER" id="PTHR43166:SF30">
    <property type="entry name" value="METHIONINE IMPORT ATP-BINDING PROTEIN METN"/>
    <property type="match status" value="1"/>
</dbReference>
<dbReference type="Pfam" id="PF00005">
    <property type="entry name" value="ABC_tran"/>
    <property type="match status" value="1"/>
</dbReference>
<dbReference type="Pfam" id="PF09383">
    <property type="entry name" value="NIL"/>
    <property type="match status" value="1"/>
</dbReference>
<dbReference type="SMART" id="SM00382">
    <property type="entry name" value="AAA"/>
    <property type="match status" value="1"/>
</dbReference>
<dbReference type="SMART" id="SM00930">
    <property type="entry name" value="NIL"/>
    <property type="match status" value="1"/>
</dbReference>
<dbReference type="SUPFAM" id="SSF55021">
    <property type="entry name" value="ACT-like"/>
    <property type="match status" value="1"/>
</dbReference>
<dbReference type="SUPFAM" id="SSF52540">
    <property type="entry name" value="P-loop containing nucleoside triphosphate hydrolases"/>
    <property type="match status" value="1"/>
</dbReference>
<dbReference type="PROSITE" id="PS00211">
    <property type="entry name" value="ABC_TRANSPORTER_1"/>
    <property type="match status" value="1"/>
</dbReference>
<dbReference type="PROSITE" id="PS50893">
    <property type="entry name" value="ABC_TRANSPORTER_2"/>
    <property type="match status" value="1"/>
</dbReference>
<dbReference type="PROSITE" id="PS51264">
    <property type="entry name" value="METN"/>
    <property type="match status" value="1"/>
</dbReference>
<sequence length="341" mass="37808">MIEFQNVTKTFTLGKRKVEAVKEVSLTIEKGDIYGIIGFSGAGKSTLLRLVNMLERPTEGSVHIQGTDVGKLSAKQLRERRRNIGMIFQNFNLFQSRTVAGNIAYPLKLAGTSKSVVTKRVSELLQFVGLSDKAKDYPDQLSGGQKQRVGIARALATSPDILICDEATSALDPNTTSDILKLLKKVNRDLGITILLITHEMGVIQSICDKVAVMEDGKVIENGNVFDTFTKPSHETTKRFIRSVQQELPSEKVLKEWTEAGGGNLYRVLFKGERATDPILSSTTRKHNIDFNIVYGSVRELQEKLFGNLIVSFGGDEQQIQHVIQELELIVDIEEVYSHGG</sequence>
<reference key="1">
    <citation type="journal article" date="2002" name="Nucleic Acids Res.">
        <title>Genome sequence of Oceanobacillus iheyensis isolated from the Iheya Ridge and its unexpected adaptive capabilities to extreme environments.</title>
        <authorList>
            <person name="Takami H."/>
            <person name="Takaki Y."/>
            <person name="Uchiyama I."/>
        </authorList>
    </citation>
    <scope>NUCLEOTIDE SEQUENCE [LARGE SCALE GENOMIC DNA]</scope>
    <source>
        <strain>DSM 14371 / CIP 107618 / JCM 11309 / KCTC 3954 / HTE831</strain>
    </source>
</reference>
<gene>
    <name evidence="1" type="primary">metN3</name>
    <name type="ordered locus">OB3163</name>
</gene>
<keyword id="KW-0029">Amino-acid transport</keyword>
<keyword id="KW-0067">ATP-binding</keyword>
<keyword id="KW-1003">Cell membrane</keyword>
<keyword id="KW-0472">Membrane</keyword>
<keyword id="KW-0547">Nucleotide-binding</keyword>
<keyword id="KW-1185">Reference proteome</keyword>
<keyword id="KW-1278">Translocase</keyword>
<keyword id="KW-0813">Transport</keyword>
<comment type="function">
    <text evidence="1">Part of the ABC transporter complex MetNIQ involved in methionine import. Responsible for energy coupling to the transport system.</text>
</comment>
<comment type="catalytic activity">
    <reaction evidence="1">
        <text>L-methionine(out) + ATP + H2O = L-methionine(in) + ADP + phosphate + H(+)</text>
        <dbReference type="Rhea" id="RHEA:29779"/>
        <dbReference type="ChEBI" id="CHEBI:15377"/>
        <dbReference type="ChEBI" id="CHEBI:15378"/>
        <dbReference type="ChEBI" id="CHEBI:30616"/>
        <dbReference type="ChEBI" id="CHEBI:43474"/>
        <dbReference type="ChEBI" id="CHEBI:57844"/>
        <dbReference type="ChEBI" id="CHEBI:456216"/>
        <dbReference type="EC" id="7.4.2.11"/>
    </reaction>
</comment>
<comment type="catalytic activity">
    <reaction evidence="1">
        <text>D-methionine(out) + ATP + H2O = D-methionine(in) + ADP + phosphate + H(+)</text>
        <dbReference type="Rhea" id="RHEA:29767"/>
        <dbReference type="ChEBI" id="CHEBI:15377"/>
        <dbReference type="ChEBI" id="CHEBI:15378"/>
        <dbReference type="ChEBI" id="CHEBI:30616"/>
        <dbReference type="ChEBI" id="CHEBI:43474"/>
        <dbReference type="ChEBI" id="CHEBI:57932"/>
        <dbReference type="ChEBI" id="CHEBI:456216"/>
        <dbReference type="EC" id="7.4.2.11"/>
    </reaction>
</comment>
<comment type="subunit">
    <text evidence="1">The complex is composed of two ATP-binding proteins (MetN), two transmembrane proteins (MetI) and a solute-binding protein (MetQ).</text>
</comment>
<comment type="subcellular location">
    <subcellularLocation>
        <location evidence="1">Cell membrane</location>
        <topology evidence="1">Peripheral membrane protein</topology>
    </subcellularLocation>
</comment>
<comment type="similarity">
    <text evidence="1">Belongs to the ABC transporter superfamily. Methionine importer (TC 3.A.1.24) family.</text>
</comment>